<protein>
    <recommendedName>
        <fullName evidence="4">Carboxysome assembly protein CcmO</fullName>
    </recommendedName>
    <alternativeName>
        <fullName>Carbon dioxide concentrating mechanism protein CcmO</fullName>
    </alternativeName>
</protein>
<reference key="1">
    <citation type="journal article" date="1985" name="Mol. Gen. Genet.">
        <title>Genes for the large and small subunits of ribulose-1,5-bisphosphate carboxylase/oxygenase constitute a single operon in a cyanobacterium Anacystis nidulans 6301.</title>
        <authorList>
            <person name="Shinozaki K."/>
            <person name="Sugiura M."/>
        </authorList>
    </citation>
    <scope>NUCLEOTIDE SEQUENCE [GENOMIC DNA]</scope>
</reference>
<reference key="2">
    <citation type="journal article" date="2007" name="Photosyn. Res.">
        <title>Complete nucleotide sequence of the freshwater unicellular cyanobacterium Synechococcus elongatus PCC 6301 chromosome: gene content and organization.</title>
        <authorList>
            <person name="Sugita C."/>
            <person name="Ogata K."/>
            <person name="Shikata M."/>
            <person name="Jikuya H."/>
            <person name="Takano J."/>
            <person name="Furumichi M."/>
            <person name="Kanehisa M."/>
            <person name="Omata T."/>
            <person name="Sugiura M."/>
            <person name="Sugita M."/>
        </authorList>
    </citation>
    <scope>NUCLEOTIDE SEQUENCE [LARGE SCALE GENOMIC DNA]</scope>
    <source>
        <strain>ATCC 27144 / PCC 6301 / SAUG 1402/1</strain>
    </source>
</reference>
<proteinExistence type="inferred from homology"/>
<gene>
    <name type="primary">ccmO</name>
    <name type="ordered locus">syc0131_c</name>
</gene>
<accession>P23656</accession>
<accession>P23655</accession>
<accession>Q5N5U7</accession>
<dbReference type="EMBL" id="X03220">
    <property type="protein sequence ID" value="CAA26970.1"/>
    <property type="status" value="ALT_FRAME"/>
    <property type="molecule type" value="Genomic_DNA"/>
</dbReference>
<dbReference type="EMBL" id="X03220">
    <property type="protein sequence ID" value="CAA26971.1"/>
    <property type="status" value="ALT_FRAME"/>
    <property type="molecule type" value="Genomic_DNA"/>
</dbReference>
<dbReference type="EMBL" id="AP008231">
    <property type="protein sequence ID" value="BAD78321.1"/>
    <property type="molecule type" value="Genomic_DNA"/>
</dbReference>
<dbReference type="PIR" id="S07310">
    <property type="entry name" value="S07310"/>
</dbReference>
<dbReference type="RefSeq" id="WP_011242445.1">
    <property type="nucleotide sequence ID" value="NZ_CP085785.1"/>
</dbReference>
<dbReference type="SMR" id="P23656"/>
<dbReference type="KEGG" id="syc:syc0131_c"/>
<dbReference type="eggNOG" id="COG4577">
    <property type="taxonomic scope" value="Bacteria"/>
</dbReference>
<dbReference type="Proteomes" id="UP000001175">
    <property type="component" value="Chromosome"/>
</dbReference>
<dbReference type="GO" id="GO:0031470">
    <property type="term" value="C:carboxysome"/>
    <property type="evidence" value="ECO:0007669"/>
    <property type="project" value="UniProtKB-SubCell"/>
</dbReference>
<dbReference type="GO" id="GO:0043886">
    <property type="term" value="F:structural constituent of carboxysome shell"/>
    <property type="evidence" value="ECO:0007669"/>
    <property type="project" value="UniProtKB-ARBA"/>
</dbReference>
<dbReference type="GO" id="GO:0015977">
    <property type="term" value="P:carbon fixation"/>
    <property type="evidence" value="ECO:0007669"/>
    <property type="project" value="UniProtKB-KW"/>
</dbReference>
<dbReference type="GO" id="GO:0015979">
    <property type="term" value="P:photosynthesis"/>
    <property type="evidence" value="ECO:0007669"/>
    <property type="project" value="UniProtKB-KW"/>
</dbReference>
<dbReference type="CDD" id="cd07057">
    <property type="entry name" value="BMC_CcmK"/>
    <property type="match status" value="2"/>
</dbReference>
<dbReference type="Gene3D" id="3.30.70.1710">
    <property type="match status" value="2"/>
</dbReference>
<dbReference type="InterPro" id="IPR020808">
    <property type="entry name" value="Bact_microcomp_CS"/>
</dbReference>
<dbReference type="InterPro" id="IPR000249">
    <property type="entry name" value="BMC_dom"/>
</dbReference>
<dbReference type="InterPro" id="IPR050575">
    <property type="entry name" value="BMC_shell"/>
</dbReference>
<dbReference type="InterPro" id="IPR037233">
    <property type="entry name" value="CcmK-like_sf"/>
</dbReference>
<dbReference type="InterPro" id="IPR044872">
    <property type="entry name" value="CcmK/CsoS1_BMC"/>
</dbReference>
<dbReference type="PANTHER" id="PTHR33941:SF11">
    <property type="entry name" value="BACTERIAL MICROCOMPARTMENT SHELL PROTEIN PDUJ"/>
    <property type="match status" value="1"/>
</dbReference>
<dbReference type="PANTHER" id="PTHR33941">
    <property type="entry name" value="PROPANEDIOL UTILIZATION PROTEIN PDUA"/>
    <property type="match status" value="1"/>
</dbReference>
<dbReference type="Pfam" id="PF00936">
    <property type="entry name" value="BMC"/>
    <property type="match status" value="2"/>
</dbReference>
<dbReference type="SMART" id="SM00877">
    <property type="entry name" value="BMC"/>
    <property type="match status" value="2"/>
</dbReference>
<dbReference type="SUPFAM" id="SSF143414">
    <property type="entry name" value="CcmK-like"/>
    <property type="match status" value="2"/>
</dbReference>
<dbReference type="PROSITE" id="PS01139">
    <property type="entry name" value="BMC_1"/>
    <property type="match status" value="2"/>
</dbReference>
<dbReference type="PROSITE" id="PS51930">
    <property type="entry name" value="BMC_2"/>
    <property type="match status" value="2"/>
</dbReference>
<sequence length="276" mass="29431">MSASLPAYSQPRNAGALGVICTRSFPAVVGTADMMLKSADVTLIGYEKTGSGFCTAIIRGGYADIKLALEAGVATARQFEQYVSSTILPRPQGNLEAVLPISRRLSQEAMATRSHQNVGAIGLIETNGFPALVGAADAMLKSANVKLICYEKTGSGLCTAIVQGTVSNVTVAVEAGMYAAERIGQLNAIMVIPRPLDDLMDSLPEPQSDSEAAQPLQLPLRVREKQPLLELPELERQPIAIEAPRLLAEERQSALELAQETPLAEPLELPNPRDDQ</sequence>
<name>CCMO_SYNP6</name>
<evidence type="ECO:0000250" key="1">
    <source>
        <dbReference type="UniProtKB" id="P46205"/>
    </source>
</evidence>
<evidence type="ECO:0000255" key="2">
    <source>
        <dbReference type="PROSITE-ProRule" id="PRU01278"/>
    </source>
</evidence>
<evidence type="ECO:0000256" key="3">
    <source>
        <dbReference type="SAM" id="MobiDB-lite"/>
    </source>
</evidence>
<evidence type="ECO:0000305" key="4"/>
<feature type="chain" id="PRO_0000004788" description="Carboxysome assembly protein CcmO">
    <location>
        <begin position="1"/>
        <end position="276"/>
    </location>
</feature>
<feature type="domain" description="BMC 1" evidence="2">
    <location>
        <begin position="16"/>
        <end position="100"/>
    </location>
</feature>
<feature type="domain" description="BMC 2" evidence="2">
    <location>
        <begin position="120"/>
        <end position="204"/>
    </location>
</feature>
<feature type="region of interest" description="Disordered" evidence="3">
    <location>
        <begin position="200"/>
        <end position="219"/>
    </location>
</feature>
<feature type="region of interest" description="Disordered" evidence="3">
    <location>
        <begin position="252"/>
        <end position="276"/>
    </location>
</feature>
<feature type="sequence conflict" description="In Ref. 1; CAA26970." evidence="4" ref="1">
    <original>Q</original>
    <variation>T</variation>
    <location>
        <position position="81"/>
    </location>
</feature>
<keyword id="KW-1283">Bacterial microcompartment</keyword>
<keyword id="KW-0120">Carbon dioxide fixation</keyword>
<keyword id="KW-1282">Carboxysome</keyword>
<keyword id="KW-0602">Photosynthesis</keyword>
<keyword id="KW-0677">Repeat</keyword>
<organism>
    <name type="scientific">Synechococcus sp. (strain ATCC 27144 / PCC 6301 / SAUG 1402/1)</name>
    <name type="common">Anacystis nidulans</name>
    <dbReference type="NCBI Taxonomy" id="269084"/>
    <lineage>
        <taxon>Bacteria</taxon>
        <taxon>Bacillati</taxon>
        <taxon>Cyanobacteriota</taxon>
        <taxon>Cyanophyceae</taxon>
        <taxon>Synechococcales</taxon>
        <taxon>Synechococcaceae</taxon>
        <taxon>Synechococcus</taxon>
    </lineage>
</organism>
<comment type="function">
    <text evidence="1">Required for formation of the carboxysome, a polyhedral inclusion where RuBisCO (ribulose bisphosphate carboxylase, rbcL-rbcS) is sequestered. Required for recruitment of major shell protein CcmK2 to the pre-carboxysome. Suggested to be a carboxysome shell protein.</text>
</comment>
<comment type="subunit">
    <text evidence="1">Homooligomerizes, possibly as a trimer, interacts with CcmK in the carboxysome.</text>
</comment>
<comment type="subcellular location">
    <subcellularLocation>
        <location evidence="1">Carboxysome</location>
    </subcellularLocation>
    <text evidence="4">This cyanobacterium makes beta-type carboxysomes.</text>
</comment>
<comment type="domain">
    <text evidence="1">Has 2 BMC domains, is thought to trimerize giving a hexamer that may interact with CcmK proteins in the carboxysome shell.</text>
</comment>
<comment type="similarity">
    <text evidence="2">Belongs to the bacterial microcompartments protein family.</text>
</comment>
<comment type="sequence caution" evidence="4">
    <conflict type="frameshift">
        <sequence resource="EMBL-CDS" id="CAA26970"/>
    </conflict>
</comment>
<comment type="sequence caution" evidence="4">
    <conflict type="frameshift">
        <sequence resource="EMBL-CDS" id="CAA26971"/>
    </conflict>
</comment>